<comment type="function">
    <text evidence="1">Catalyzes the conversion of glucosamine-6-phosphate to glucosamine-1-phosphate.</text>
</comment>
<comment type="catalytic activity">
    <reaction evidence="1">
        <text>alpha-D-glucosamine 1-phosphate = D-glucosamine 6-phosphate</text>
        <dbReference type="Rhea" id="RHEA:23424"/>
        <dbReference type="ChEBI" id="CHEBI:58516"/>
        <dbReference type="ChEBI" id="CHEBI:58725"/>
        <dbReference type="EC" id="5.4.2.10"/>
    </reaction>
</comment>
<comment type="cofactor">
    <cofactor evidence="1">
        <name>Mg(2+)</name>
        <dbReference type="ChEBI" id="CHEBI:18420"/>
    </cofactor>
    <text evidence="1">Binds 1 Mg(2+) ion per subunit.</text>
</comment>
<comment type="PTM">
    <text evidence="1">Activated by phosphorylation.</text>
</comment>
<comment type="similarity">
    <text evidence="1">Belongs to the phosphohexose mutase family.</text>
</comment>
<organism>
    <name type="scientific">Brucella abortus (strain 2308)</name>
    <dbReference type="NCBI Taxonomy" id="359391"/>
    <lineage>
        <taxon>Bacteria</taxon>
        <taxon>Pseudomonadati</taxon>
        <taxon>Pseudomonadota</taxon>
        <taxon>Alphaproteobacteria</taxon>
        <taxon>Hyphomicrobiales</taxon>
        <taxon>Brucellaceae</taxon>
        <taxon>Brucella/Ochrobactrum group</taxon>
        <taxon>Brucella</taxon>
    </lineage>
</organism>
<keyword id="KW-0413">Isomerase</keyword>
<keyword id="KW-0460">Magnesium</keyword>
<keyword id="KW-0479">Metal-binding</keyword>
<keyword id="KW-0597">Phosphoprotein</keyword>
<keyword id="KW-1185">Reference proteome</keyword>
<proteinExistence type="inferred from homology"/>
<dbReference type="EC" id="5.4.2.10" evidence="1"/>
<dbReference type="EMBL" id="AM040264">
    <property type="protein sequence ID" value="CAJ11658.1"/>
    <property type="molecule type" value="Genomic_DNA"/>
</dbReference>
<dbReference type="SMR" id="Q2YQH8"/>
<dbReference type="STRING" id="359391.BAB1_1702"/>
<dbReference type="KEGG" id="bmf:BAB1_1702"/>
<dbReference type="PATRIC" id="fig|359391.11.peg.217"/>
<dbReference type="HOGENOM" id="CLU_016950_7_0_5"/>
<dbReference type="PhylomeDB" id="Q2YQH8"/>
<dbReference type="Proteomes" id="UP000002719">
    <property type="component" value="Chromosome I"/>
</dbReference>
<dbReference type="GO" id="GO:0005829">
    <property type="term" value="C:cytosol"/>
    <property type="evidence" value="ECO:0007669"/>
    <property type="project" value="TreeGrafter"/>
</dbReference>
<dbReference type="GO" id="GO:0000287">
    <property type="term" value="F:magnesium ion binding"/>
    <property type="evidence" value="ECO:0007669"/>
    <property type="project" value="UniProtKB-UniRule"/>
</dbReference>
<dbReference type="GO" id="GO:0008966">
    <property type="term" value="F:phosphoglucosamine mutase activity"/>
    <property type="evidence" value="ECO:0007669"/>
    <property type="project" value="UniProtKB-UniRule"/>
</dbReference>
<dbReference type="GO" id="GO:0004615">
    <property type="term" value="F:phosphomannomutase activity"/>
    <property type="evidence" value="ECO:0007669"/>
    <property type="project" value="TreeGrafter"/>
</dbReference>
<dbReference type="GO" id="GO:0005975">
    <property type="term" value="P:carbohydrate metabolic process"/>
    <property type="evidence" value="ECO:0007669"/>
    <property type="project" value="InterPro"/>
</dbReference>
<dbReference type="GO" id="GO:0009252">
    <property type="term" value="P:peptidoglycan biosynthetic process"/>
    <property type="evidence" value="ECO:0007669"/>
    <property type="project" value="TreeGrafter"/>
</dbReference>
<dbReference type="GO" id="GO:0006048">
    <property type="term" value="P:UDP-N-acetylglucosamine biosynthetic process"/>
    <property type="evidence" value="ECO:0007669"/>
    <property type="project" value="TreeGrafter"/>
</dbReference>
<dbReference type="CDD" id="cd05802">
    <property type="entry name" value="GlmM"/>
    <property type="match status" value="1"/>
</dbReference>
<dbReference type="FunFam" id="3.30.310.50:FF:000001">
    <property type="entry name" value="Phosphoglucosamine mutase"/>
    <property type="match status" value="1"/>
</dbReference>
<dbReference type="FunFam" id="3.40.120.10:FF:000001">
    <property type="entry name" value="Phosphoglucosamine mutase"/>
    <property type="match status" value="1"/>
</dbReference>
<dbReference type="FunFam" id="3.40.120.10:FF:000003">
    <property type="entry name" value="Phosphoglucosamine mutase"/>
    <property type="match status" value="1"/>
</dbReference>
<dbReference type="Gene3D" id="3.40.120.10">
    <property type="entry name" value="Alpha-D-Glucose-1,6-Bisphosphate, subunit A, domain 3"/>
    <property type="match status" value="3"/>
</dbReference>
<dbReference type="Gene3D" id="3.30.310.50">
    <property type="entry name" value="Alpha-D-phosphohexomutase, C-terminal domain"/>
    <property type="match status" value="1"/>
</dbReference>
<dbReference type="HAMAP" id="MF_01554_B">
    <property type="entry name" value="GlmM_B"/>
    <property type="match status" value="1"/>
</dbReference>
<dbReference type="InterPro" id="IPR005844">
    <property type="entry name" value="A-D-PHexomutase_a/b/a-I"/>
</dbReference>
<dbReference type="InterPro" id="IPR016055">
    <property type="entry name" value="A-D-PHexomutase_a/b/a-I/II/III"/>
</dbReference>
<dbReference type="InterPro" id="IPR005845">
    <property type="entry name" value="A-D-PHexomutase_a/b/a-II"/>
</dbReference>
<dbReference type="InterPro" id="IPR005846">
    <property type="entry name" value="A-D-PHexomutase_a/b/a-III"/>
</dbReference>
<dbReference type="InterPro" id="IPR005843">
    <property type="entry name" value="A-D-PHexomutase_C"/>
</dbReference>
<dbReference type="InterPro" id="IPR036900">
    <property type="entry name" value="A-D-PHexomutase_C_sf"/>
</dbReference>
<dbReference type="InterPro" id="IPR016066">
    <property type="entry name" value="A-D-PHexomutase_CS"/>
</dbReference>
<dbReference type="InterPro" id="IPR005841">
    <property type="entry name" value="Alpha-D-phosphohexomutase_SF"/>
</dbReference>
<dbReference type="InterPro" id="IPR006352">
    <property type="entry name" value="GlmM_bact"/>
</dbReference>
<dbReference type="InterPro" id="IPR050060">
    <property type="entry name" value="Phosphoglucosamine_mutase"/>
</dbReference>
<dbReference type="NCBIfam" id="TIGR01455">
    <property type="entry name" value="glmM"/>
    <property type="match status" value="1"/>
</dbReference>
<dbReference type="NCBIfam" id="NF008139">
    <property type="entry name" value="PRK10887.1"/>
    <property type="match status" value="1"/>
</dbReference>
<dbReference type="PANTHER" id="PTHR42946:SF1">
    <property type="entry name" value="PHOSPHOGLUCOMUTASE (ALPHA-D-GLUCOSE-1,6-BISPHOSPHATE-DEPENDENT)"/>
    <property type="match status" value="1"/>
</dbReference>
<dbReference type="PANTHER" id="PTHR42946">
    <property type="entry name" value="PHOSPHOHEXOSE MUTASE"/>
    <property type="match status" value="1"/>
</dbReference>
<dbReference type="Pfam" id="PF02878">
    <property type="entry name" value="PGM_PMM_I"/>
    <property type="match status" value="1"/>
</dbReference>
<dbReference type="Pfam" id="PF02879">
    <property type="entry name" value="PGM_PMM_II"/>
    <property type="match status" value="1"/>
</dbReference>
<dbReference type="Pfam" id="PF02880">
    <property type="entry name" value="PGM_PMM_III"/>
    <property type="match status" value="1"/>
</dbReference>
<dbReference type="Pfam" id="PF00408">
    <property type="entry name" value="PGM_PMM_IV"/>
    <property type="match status" value="1"/>
</dbReference>
<dbReference type="PRINTS" id="PR00509">
    <property type="entry name" value="PGMPMM"/>
</dbReference>
<dbReference type="SUPFAM" id="SSF55957">
    <property type="entry name" value="Phosphoglucomutase, C-terminal domain"/>
    <property type="match status" value="1"/>
</dbReference>
<dbReference type="SUPFAM" id="SSF53738">
    <property type="entry name" value="Phosphoglucomutase, first 3 domains"/>
    <property type="match status" value="3"/>
</dbReference>
<dbReference type="PROSITE" id="PS00710">
    <property type="entry name" value="PGM_PMM"/>
    <property type="match status" value="1"/>
</dbReference>
<gene>
    <name evidence="1" type="primary">glmM</name>
    <name type="ordered locus">BAB1_1702</name>
</gene>
<name>GLMM_BRUA2</name>
<reference key="1">
    <citation type="journal article" date="2005" name="Infect. Immun.">
        <title>Whole-genome analyses of speciation events in pathogenic Brucellae.</title>
        <authorList>
            <person name="Chain P.S."/>
            <person name="Comerci D.J."/>
            <person name="Tolmasky M.E."/>
            <person name="Larimer F.W."/>
            <person name="Malfatti S.A."/>
            <person name="Vergez L.M."/>
            <person name="Aguero F."/>
            <person name="Land M.L."/>
            <person name="Ugalde R.A."/>
            <person name="Garcia E."/>
        </authorList>
    </citation>
    <scope>NUCLEOTIDE SEQUENCE [LARGE SCALE GENOMIC DNA]</scope>
    <source>
        <strain>2308</strain>
    </source>
</reference>
<evidence type="ECO:0000255" key="1">
    <source>
        <dbReference type="HAMAP-Rule" id="MF_01554"/>
    </source>
</evidence>
<sequence length="451" mass="48541">MTRKFFGTDGIRGQANSFPMTPEIAMKVGMAVGYIFRRKGQASRAVVGKDTRRSGYMLEKALVAGFTAAGMDVFLLGPIPTPAVAMLCRSLRADIGVMISASHNPFYDNGIKLFGPDGFKLSDQIELQIEAMIEGDMTPFLASHGDVGRAKRVDGDIYRYIEFAKRTLPRNISLNGLRVVVDCANGAGYKVAPAALWELGAEVITINNEPNGININEDCGSTHPIGLMKKVHEVRADVGIALDGDADRVLLVDENGTVIDGDQLMAVIAESWAASNRLEGGGIVATVMSNLGLERFLADRNLTLARTKVGDRYVVEHMREHGFNVGGEQSGHIVLSDFATTGDGLISALQILAVAQEQNKPISDVCRKFQPVPQLLKNVRTTGGKPLENKRVKSAIDEAKERLGGQGRLVIRPSGTEPLIRVMAEGDDRGLVEKVVNDIIDVISSESSAAA</sequence>
<accession>Q2YQH8</accession>
<feature type="chain" id="PRO_0000301287" description="Phosphoglucosamine mutase">
    <location>
        <begin position="1"/>
        <end position="451"/>
    </location>
</feature>
<feature type="active site" description="Phosphoserine intermediate" evidence="1">
    <location>
        <position position="102"/>
    </location>
</feature>
<feature type="binding site" description="via phosphate group" evidence="1">
    <location>
        <position position="102"/>
    </location>
    <ligand>
        <name>Mg(2+)</name>
        <dbReference type="ChEBI" id="CHEBI:18420"/>
    </ligand>
</feature>
<feature type="binding site" evidence="1">
    <location>
        <position position="243"/>
    </location>
    <ligand>
        <name>Mg(2+)</name>
        <dbReference type="ChEBI" id="CHEBI:18420"/>
    </ligand>
</feature>
<feature type="binding site" evidence="1">
    <location>
        <position position="245"/>
    </location>
    <ligand>
        <name>Mg(2+)</name>
        <dbReference type="ChEBI" id="CHEBI:18420"/>
    </ligand>
</feature>
<feature type="binding site" evidence="1">
    <location>
        <position position="247"/>
    </location>
    <ligand>
        <name>Mg(2+)</name>
        <dbReference type="ChEBI" id="CHEBI:18420"/>
    </ligand>
</feature>
<feature type="modified residue" description="Phosphoserine" evidence="1">
    <location>
        <position position="102"/>
    </location>
</feature>
<protein>
    <recommendedName>
        <fullName evidence="1">Phosphoglucosamine mutase</fullName>
        <ecNumber evidence="1">5.4.2.10</ecNumber>
    </recommendedName>
</protein>